<feature type="chain" id="PRO_0000306563" description="Small ribosomal subunit protein uS13">
    <location>
        <begin position="1"/>
        <end position="120"/>
    </location>
</feature>
<feature type="region of interest" description="Disordered" evidence="2">
    <location>
        <begin position="94"/>
        <end position="120"/>
    </location>
</feature>
<dbReference type="EMBL" id="AM406670">
    <property type="protein sequence ID" value="CAL96010.1"/>
    <property type="molecule type" value="Genomic_DNA"/>
</dbReference>
<dbReference type="RefSeq" id="WP_011767117.1">
    <property type="nucleotide sequence ID" value="NC_008702.1"/>
</dbReference>
<dbReference type="SMR" id="A1KB04"/>
<dbReference type="STRING" id="62928.azo3394"/>
<dbReference type="KEGG" id="aoa:dqs_3533"/>
<dbReference type="KEGG" id="azo:azo3394"/>
<dbReference type="eggNOG" id="COG0099">
    <property type="taxonomic scope" value="Bacteria"/>
</dbReference>
<dbReference type="HOGENOM" id="CLU_103849_1_2_4"/>
<dbReference type="OrthoDB" id="9803610at2"/>
<dbReference type="Proteomes" id="UP000002588">
    <property type="component" value="Chromosome"/>
</dbReference>
<dbReference type="GO" id="GO:0005829">
    <property type="term" value="C:cytosol"/>
    <property type="evidence" value="ECO:0007669"/>
    <property type="project" value="TreeGrafter"/>
</dbReference>
<dbReference type="GO" id="GO:0015935">
    <property type="term" value="C:small ribosomal subunit"/>
    <property type="evidence" value="ECO:0007669"/>
    <property type="project" value="TreeGrafter"/>
</dbReference>
<dbReference type="GO" id="GO:0019843">
    <property type="term" value="F:rRNA binding"/>
    <property type="evidence" value="ECO:0007669"/>
    <property type="project" value="UniProtKB-UniRule"/>
</dbReference>
<dbReference type="GO" id="GO:0003735">
    <property type="term" value="F:structural constituent of ribosome"/>
    <property type="evidence" value="ECO:0007669"/>
    <property type="project" value="InterPro"/>
</dbReference>
<dbReference type="GO" id="GO:0000049">
    <property type="term" value="F:tRNA binding"/>
    <property type="evidence" value="ECO:0007669"/>
    <property type="project" value="UniProtKB-UniRule"/>
</dbReference>
<dbReference type="GO" id="GO:0006412">
    <property type="term" value="P:translation"/>
    <property type="evidence" value="ECO:0007669"/>
    <property type="project" value="UniProtKB-UniRule"/>
</dbReference>
<dbReference type="FunFam" id="1.10.8.50:FF:000001">
    <property type="entry name" value="30S ribosomal protein S13"/>
    <property type="match status" value="1"/>
</dbReference>
<dbReference type="FunFam" id="4.10.910.10:FF:000001">
    <property type="entry name" value="30S ribosomal protein S13"/>
    <property type="match status" value="1"/>
</dbReference>
<dbReference type="Gene3D" id="1.10.8.50">
    <property type="match status" value="1"/>
</dbReference>
<dbReference type="Gene3D" id="4.10.910.10">
    <property type="entry name" value="30s ribosomal protein s13, domain 2"/>
    <property type="match status" value="1"/>
</dbReference>
<dbReference type="HAMAP" id="MF_01315">
    <property type="entry name" value="Ribosomal_uS13"/>
    <property type="match status" value="1"/>
</dbReference>
<dbReference type="InterPro" id="IPR027437">
    <property type="entry name" value="Rbsml_uS13_C"/>
</dbReference>
<dbReference type="InterPro" id="IPR001892">
    <property type="entry name" value="Ribosomal_uS13"/>
</dbReference>
<dbReference type="InterPro" id="IPR010979">
    <property type="entry name" value="Ribosomal_uS13-like_H2TH"/>
</dbReference>
<dbReference type="InterPro" id="IPR019980">
    <property type="entry name" value="Ribosomal_uS13_bac-type"/>
</dbReference>
<dbReference type="InterPro" id="IPR018269">
    <property type="entry name" value="Ribosomal_uS13_CS"/>
</dbReference>
<dbReference type="NCBIfam" id="TIGR03631">
    <property type="entry name" value="uS13_bact"/>
    <property type="match status" value="1"/>
</dbReference>
<dbReference type="PANTHER" id="PTHR10871">
    <property type="entry name" value="30S RIBOSOMAL PROTEIN S13/40S RIBOSOMAL PROTEIN S18"/>
    <property type="match status" value="1"/>
</dbReference>
<dbReference type="PANTHER" id="PTHR10871:SF1">
    <property type="entry name" value="SMALL RIBOSOMAL SUBUNIT PROTEIN US13M"/>
    <property type="match status" value="1"/>
</dbReference>
<dbReference type="Pfam" id="PF00416">
    <property type="entry name" value="Ribosomal_S13"/>
    <property type="match status" value="1"/>
</dbReference>
<dbReference type="PIRSF" id="PIRSF002134">
    <property type="entry name" value="Ribosomal_S13"/>
    <property type="match status" value="1"/>
</dbReference>
<dbReference type="SUPFAM" id="SSF46946">
    <property type="entry name" value="S13-like H2TH domain"/>
    <property type="match status" value="1"/>
</dbReference>
<dbReference type="PROSITE" id="PS00646">
    <property type="entry name" value="RIBOSOMAL_S13_1"/>
    <property type="match status" value="1"/>
</dbReference>
<dbReference type="PROSITE" id="PS50159">
    <property type="entry name" value="RIBOSOMAL_S13_2"/>
    <property type="match status" value="1"/>
</dbReference>
<gene>
    <name evidence="1" type="primary">rpsM</name>
    <name type="ordered locus">azo3394</name>
</gene>
<keyword id="KW-1185">Reference proteome</keyword>
<keyword id="KW-0687">Ribonucleoprotein</keyword>
<keyword id="KW-0689">Ribosomal protein</keyword>
<keyword id="KW-0694">RNA-binding</keyword>
<keyword id="KW-0699">rRNA-binding</keyword>
<keyword id="KW-0820">tRNA-binding</keyword>
<comment type="function">
    <text evidence="1">Located at the top of the head of the 30S subunit, it contacts several helices of the 16S rRNA. In the 70S ribosome it contacts the 23S rRNA (bridge B1a) and protein L5 of the 50S subunit (bridge B1b), connecting the 2 subunits; these bridges are implicated in subunit movement. Contacts the tRNAs in the A and P-sites.</text>
</comment>
<comment type="subunit">
    <text evidence="1">Part of the 30S ribosomal subunit. Forms a loose heterodimer with protein S19. Forms two bridges to the 50S subunit in the 70S ribosome.</text>
</comment>
<comment type="similarity">
    <text evidence="1">Belongs to the universal ribosomal protein uS13 family.</text>
</comment>
<name>RS13_AZOSB</name>
<reference key="1">
    <citation type="journal article" date="2006" name="Nat. Biotechnol.">
        <title>Complete genome of the mutualistic, N2-fixing grass endophyte Azoarcus sp. strain BH72.</title>
        <authorList>
            <person name="Krause A."/>
            <person name="Ramakumar A."/>
            <person name="Bartels D."/>
            <person name="Battistoni F."/>
            <person name="Bekel T."/>
            <person name="Boch J."/>
            <person name="Boehm M."/>
            <person name="Friedrich F."/>
            <person name="Hurek T."/>
            <person name="Krause L."/>
            <person name="Linke B."/>
            <person name="McHardy A.C."/>
            <person name="Sarkar A."/>
            <person name="Schneiker S."/>
            <person name="Syed A.A."/>
            <person name="Thauer R."/>
            <person name="Vorhoelter F.-J."/>
            <person name="Weidner S."/>
            <person name="Puehler A."/>
            <person name="Reinhold-Hurek B."/>
            <person name="Kaiser O."/>
            <person name="Goesmann A."/>
        </authorList>
    </citation>
    <scope>NUCLEOTIDE SEQUENCE [LARGE SCALE GENOMIC DNA]</scope>
    <source>
        <strain>BH72</strain>
    </source>
</reference>
<sequence>MARIAGVNIPNHKHAEIALTAIYGIGRSRAQKICDAAGVVRSAKIKDLTESDMEKLRDEVGRFVVEGDLRREVTMNIKRLMDLGCYRGVRHRRGLPLRGQRTRTNARTRKGPRKAIAGKK</sequence>
<accession>A1KB04</accession>
<organism>
    <name type="scientific">Azoarcus sp. (strain BH72)</name>
    <dbReference type="NCBI Taxonomy" id="418699"/>
    <lineage>
        <taxon>Bacteria</taxon>
        <taxon>Pseudomonadati</taxon>
        <taxon>Pseudomonadota</taxon>
        <taxon>Betaproteobacteria</taxon>
        <taxon>Rhodocyclales</taxon>
        <taxon>Zoogloeaceae</taxon>
        <taxon>Azoarcus</taxon>
    </lineage>
</organism>
<protein>
    <recommendedName>
        <fullName evidence="1">Small ribosomal subunit protein uS13</fullName>
    </recommendedName>
    <alternativeName>
        <fullName evidence="3">30S ribosomal protein S13</fullName>
    </alternativeName>
</protein>
<proteinExistence type="inferred from homology"/>
<evidence type="ECO:0000255" key="1">
    <source>
        <dbReference type="HAMAP-Rule" id="MF_01315"/>
    </source>
</evidence>
<evidence type="ECO:0000256" key="2">
    <source>
        <dbReference type="SAM" id="MobiDB-lite"/>
    </source>
</evidence>
<evidence type="ECO:0000305" key="3"/>